<comment type="function">
    <text evidence="4">Voltage-gated potassium channel inhibitor (Kv) that acts on Kv1.3/KCNA3 and Kv7.1/KCNQ1. 1 uM of the toxin inhibits Kv1.3/KCNA3 currents by 35.1%, whereas 10 uM of the toxin inhibits Kv7.1/KCNQ1 currents by 44.9%.</text>
</comment>
<comment type="subcellular location">
    <subcellularLocation>
        <location>Secreted</location>
    </subcellularLocation>
</comment>
<comment type="tissue specificity">
    <text>Expressed by the venom gland.</text>
</comment>
<comment type="domain">
    <text evidence="2">Has the structural arrangement of two alpha-helices stabilized by disulfide bonds (CSalpha/alpha 2(S-S)).</text>
</comment>
<comment type="miscellaneous">
    <text evidence="9">Negative results: does not show activity on ion channels KCa2.3/KCNN3, TRPV1, and KCa1.1/KCNMA1.</text>
</comment>
<comment type="similarity">
    <text evidence="8">Belongs to the short scorpion toxin superfamily. Potassium channel inhibitor kappa-KTx family. Kappa-KTx 2 subfamily.</text>
</comment>
<protein>
    <recommendedName>
        <fullName evidence="6">Potassium channel toxin kappa-KTx 2.8</fullName>
    </recommendedName>
    <alternativeName>
        <fullName evidence="5">HSP053C.2</fullName>
    </alternativeName>
    <alternativeName>
        <fullName evidence="7">Toxin HeTx204</fullName>
    </alternativeName>
    <alternativeName>
        <fullName evidence="7">Toxin kappa-KTx 2.7</fullName>
    </alternativeName>
</protein>
<proteinExistence type="evidence at protein level"/>
<feature type="signal peptide" evidence="3">
    <location>
        <begin position="1" status="less than"/>
        <end position="21"/>
    </location>
</feature>
<feature type="propeptide" id="PRO_0000416800" evidence="1">
    <location>
        <begin position="22"/>
        <end position="35"/>
    </location>
</feature>
<feature type="peptide" id="PRO_0000416801" description="Potassium channel toxin kappa-KTx 2.8">
    <location>
        <begin position="38"/>
        <end position="61"/>
    </location>
</feature>
<feature type="disulfide bond" evidence="2">
    <location>
        <begin position="41"/>
        <end position="59"/>
    </location>
</feature>
<feature type="disulfide bond" evidence="2">
    <location>
        <begin position="45"/>
        <end position="55"/>
    </location>
</feature>
<feature type="non-terminal residue">
    <location>
        <position position="1"/>
    </location>
</feature>
<keyword id="KW-0165">Cleavage on pair of basic residues</keyword>
<keyword id="KW-1015">Disulfide bond</keyword>
<keyword id="KW-0872">Ion channel impairing toxin</keyword>
<keyword id="KW-0528">Neurotoxin</keyword>
<keyword id="KW-0632">Potassium channel impairing toxin</keyword>
<keyword id="KW-0964">Secreted</keyword>
<keyword id="KW-0732">Signal</keyword>
<keyword id="KW-0800">Toxin</keyword>
<keyword id="KW-1220">Voltage-gated potassium channel impairing toxin</keyword>
<dbReference type="EMBL" id="FD664204">
    <property type="status" value="NOT_ANNOTATED_CDS"/>
    <property type="molecule type" value="mRNA"/>
</dbReference>
<dbReference type="GO" id="GO:0005576">
    <property type="term" value="C:extracellular region"/>
    <property type="evidence" value="ECO:0007669"/>
    <property type="project" value="UniProtKB-SubCell"/>
</dbReference>
<dbReference type="GO" id="GO:0015459">
    <property type="term" value="F:potassium channel regulator activity"/>
    <property type="evidence" value="ECO:0007669"/>
    <property type="project" value="UniProtKB-KW"/>
</dbReference>
<dbReference type="GO" id="GO:0090729">
    <property type="term" value="F:toxin activity"/>
    <property type="evidence" value="ECO:0007669"/>
    <property type="project" value="UniProtKB-KW"/>
</dbReference>
<reference key="1">
    <citation type="journal article" date="2010" name="Proteomics">
        <title>Molecular diversity of toxic components from the scorpion Heterometrus petersii venom revealed by proteomic and transcriptome analysis.</title>
        <authorList>
            <person name="Ma Y."/>
            <person name="Zhao Y."/>
            <person name="Zhao R."/>
            <person name="Zhang W."/>
            <person name="He Y."/>
            <person name="Wu Y."/>
            <person name="Cao Z."/>
            <person name="Guo L."/>
            <person name="Li W."/>
        </authorList>
    </citation>
    <scope>NUCLEOTIDE SEQUENCE [MRNA]</scope>
    <scope>IDENTIFICATION BY MASS SPECTROMETRY</scope>
    <source>
        <tissue>Venom</tissue>
        <tissue>Venom gland</tissue>
    </source>
</reference>
<reference key="2">
    <citation type="journal article" date="2012" name="PLoS ONE">
        <title>Structural and functional diversity of acidic scorpion potassium channel toxins.</title>
        <authorList>
            <person name="Chen Z.Y."/>
            <person name="Zeng D.Y."/>
            <person name="Hu Y.T."/>
            <person name="He Y.W."/>
            <person name="Pan N."/>
            <person name="Ding J.P."/>
            <person name="Cao Z.J."/>
            <person name="Liu M.L."/>
            <person name="Li W.X."/>
            <person name="Yi H."/>
            <person name="Jiang L."/>
            <person name="Wu Y.L."/>
        </authorList>
    </citation>
    <scope>NUCLEOTIDE SEQUENCE [MRNA]</scope>
    <scope>FUNCTION</scope>
    <source>
        <tissue>Venom gland</tissue>
    </source>
</reference>
<reference key="3">
    <citation type="journal article" date="2012" name="Biochem. Pharmacol.">
        <title>Purification, molecular cloning and functional characterization of HelaTx1 (Heterometrus laoticus): the first member of a new kappa-KTX subfamily.</title>
        <authorList>
            <person name="Vandendriessche T."/>
            <person name="Kopljar I."/>
            <person name="Jenkins D.P."/>
            <person name="Diego-Garcia E."/>
            <person name="Abdel-Mottaleb Y."/>
            <person name="Vermassen E."/>
            <person name="Clynen E."/>
            <person name="Schoofs L."/>
            <person name="Wulff H."/>
            <person name="Snyders D."/>
            <person name="Tytgat J."/>
        </authorList>
    </citation>
    <scope>NOMENCLATURE</scope>
</reference>
<sequence>GTVYVFLLLLAFGIFTDISNACSEQMDDEDSYEVEKRGNACIEVCLQHTGNPAECDKPCDK</sequence>
<evidence type="ECO:0000250" key="1"/>
<evidence type="ECO:0000250" key="2">
    <source>
        <dbReference type="UniProtKB" id="P0C1Z3"/>
    </source>
</evidence>
<evidence type="ECO:0000255" key="3"/>
<evidence type="ECO:0000269" key="4">
    <source>
    </source>
</evidence>
<evidence type="ECO:0000303" key="5">
    <source>
    </source>
</evidence>
<evidence type="ECO:0000303" key="6">
    <source>
    </source>
</evidence>
<evidence type="ECO:0000303" key="7">
    <source>
    </source>
</evidence>
<evidence type="ECO:0000305" key="8"/>
<evidence type="ECO:0000305" key="9">
    <source>
    </source>
</evidence>
<name>KKX28_HETPE</name>
<organism>
    <name type="scientific">Heterometrus petersii</name>
    <name type="common">Asian forest scorpion</name>
    <dbReference type="NCBI Taxonomy" id="754296"/>
    <lineage>
        <taxon>Eukaryota</taxon>
        <taxon>Metazoa</taxon>
        <taxon>Ecdysozoa</taxon>
        <taxon>Arthropoda</taxon>
        <taxon>Chelicerata</taxon>
        <taxon>Arachnida</taxon>
        <taxon>Scorpiones</taxon>
        <taxon>Iurida</taxon>
        <taxon>Scorpionoidea</taxon>
        <taxon>Scorpionidae</taxon>
        <taxon>Heterometrinae</taxon>
        <taxon>Heterometrus</taxon>
    </lineage>
</organism>
<accession>P0DJ35</accession>